<feature type="chain" id="PRO_0000433132" description="NAD(P)H-dependent anabolic L-arginine dehydrogenase DauB">
    <location>
        <begin position="1"/>
        <end position="315"/>
    </location>
</feature>
<proteinExistence type="evidence at protein level"/>
<reference key="1">
    <citation type="journal article" date="2000" name="Nature">
        <title>Complete genome sequence of Pseudomonas aeruginosa PAO1, an opportunistic pathogen.</title>
        <authorList>
            <person name="Stover C.K."/>
            <person name="Pham X.-Q.T."/>
            <person name="Erwin A.L."/>
            <person name="Mizoguchi S.D."/>
            <person name="Warrener P."/>
            <person name="Hickey M.J."/>
            <person name="Brinkman F.S.L."/>
            <person name="Hufnagle W.O."/>
            <person name="Kowalik D.J."/>
            <person name="Lagrou M."/>
            <person name="Garber R.L."/>
            <person name="Goltry L."/>
            <person name="Tolentino E."/>
            <person name="Westbrock-Wadman S."/>
            <person name="Yuan Y."/>
            <person name="Brody L.L."/>
            <person name="Coulter S.N."/>
            <person name="Folger K.R."/>
            <person name="Kas A."/>
            <person name="Larbig K."/>
            <person name="Lim R.M."/>
            <person name="Smith K.A."/>
            <person name="Spencer D.H."/>
            <person name="Wong G.K.-S."/>
            <person name="Wu Z."/>
            <person name="Paulsen I.T."/>
            <person name="Reizer J."/>
            <person name="Saier M.H. Jr."/>
            <person name="Hancock R.E.W."/>
            <person name="Lory S."/>
            <person name="Olson M.V."/>
        </authorList>
    </citation>
    <scope>NUCLEOTIDE SEQUENCE [LARGE SCALE GENOMIC DNA]</scope>
    <source>
        <strain>ATCC 15692 / DSM 22644 / CIP 104116 / JCM 14847 / LMG 12228 / 1C / PRS 101 / PAO1</strain>
    </source>
</reference>
<reference key="2">
    <citation type="journal article" date="2009" name="Proc. Natl. Acad. Sci. U.S.A.">
        <title>Arginine racemization by coupled catabolic and anabolic dehydrogenases.</title>
        <authorList>
            <person name="Li C."/>
            <person name="Lu C.D."/>
        </authorList>
    </citation>
    <scope>FUNCTION</scope>
    <scope>CATALYTIC ACTIVITY</scope>
    <scope>INDUCTION</scope>
    <scope>DISRUPTION PHENOTYPE</scope>
    <source>
        <strain>ATCC 15692 / DSM 22644 / CIP 104116 / JCM 14847 / LMG 12228 / 1C / PRS 101 / PAO1</strain>
    </source>
</reference>
<reference key="3">
    <citation type="journal article" date="2010" name="Microbiology">
        <title>Regulation of the dauBAR operon and characterization of D-amino acid dehydrogenase DauA in arginine and lysine catabolism of Pseudomonas aeruginosa PAO1.</title>
        <authorList>
            <person name="Li C."/>
            <person name="Yao X."/>
            <person name="Lu C.D."/>
        </authorList>
    </citation>
    <scope>FUNCTION</scope>
    <scope>INDUCTION</scope>
    <scope>DISRUPTION PHENOTYPE</scope>
    <source>
        <strain>ATCC 15692 / DSM 22644 / CIP 104116 / JCM 14847 / LMG 12228 / 1C / PRS 101 / PAO1</strain>
    </source>
</reference>
<organism>
    <name type="scientific">Pseudomonas aeruginosa (strain ATCC 15692 / DSM 22644 / CIP 104116 / JCM 14847 / LMG 12228 / 1C / PRS 101 / PAO1)</name>
    <dbReference type="NCBI Taxonomy" id="208964"/>
    <lineage>
        <taxon>Bacteria</taxon>
        <taxon>Pseudomonadati</taxon>
        <taxon>Pseudomonadota</taxon>
        <taxon>Gammaproteobacteria</taxon>
        <taxon>Pseudomonadales</taxon>
        <taxon>Pseudomonadaceae</taxon>
        <taxon>Pseudomonas</taxon>
    </lineage>
</organism>
<gene>
    <name evidence="3" type="primary">dauB</name>
    <name type="ordered locus">PA3862</name>
</gene>
<comment type="function">
    <text evidence="1 2">Involved in the anabolism of D-lysine and D-arginine. Under aerobic conditions, the arginine succinyltransferase (AST) and arginine transaminase (ATA) pathways are 2 major routes for L-arginine utilization as the sole source of carbon and nitrogen. The D-to-L racemization of arginine by DauA and DauB is necessary, before to be channeled into the AST and/or ATA pathways. DauB catalyzes the synthesis of L-arginine from 2-ketoarginine (2-KA) and ammonium.</text>
</comment>
<comment type="catalytic activity">
    <reaction evidence="1">
        <text>L-arginine + NAD(+) + H2O = 5-guanidino-2-oxopentanoate + NH4(+) + NADH + H(+)</text>
        <dbReference type="Rhea" id="RHEA:47632"/>
        <dbReference type="ChEBI" id="CHEBI:15377"/>
        <dbReference type="ChEBI" id="CHEBI:15378"/>
        <dbReference type="ChEBI" id="CHEBI:28938"/>
        <dbReference type="ChEBI" id="CHEBI:32682"/>
        <dbReference type="ChEBI" id="CHEBI:57540"/>
        <dbReference type="ChEBI" id="CHEBI:57945"/>
        <dbReference type="ChEBI" id="CHEBI:58489"/>
        <dbReference type="EC" id="1.4.1.25"/>
    </reaction>
</comment>
<comment type="catalytic activity">
    <reaction evidence="1">
        <text>L-arginine + NADP(+) + H2O = 5-guanidino-2-oxopentanoate + NH4(+) + NADPH + H(+)</text>
        <dbReference type="Rhea" id="RHEA:47636"/>
        <dbReference type="ChEBI" id="CHEBI:15377"/>
        <dbReference type="ChEBI" id="CHEBI:15378"/>
        <dbReference type="ChEBI" id="CHEBI:28938"/>
        <dbReference type="ChEBI" id="CHEBI:32682"/>
        <dbReference type="ChEBI" id="CHEBI:57783"/>
        <dbReference type="ChEBI" id="CHEBI:58349"/>
        <dbReference type="ChEBI" id="CHEBI:58489"/>
        <dbReference type="EC" id="1.4.1.25"/>
    </reaction>
</comment>
<comment type="induction">
    <text evidence="1 2">Induced by growth on D-arginine and D-lysine. Repressed by DauR (PubMed:19139398). ArgR could be a transcriptional activator of the dauBAR operon in response to the presence of L-Arg (PubMed:19850617).</text>
</comment>
<comment type="disruption phenotype">
    <text evidence="1 2">Cells lacking this gene grow similarly to the wild-type on D-Arg or D-Lys as sole nitrogen source, but are unable to grow on D-Arg as sole carbon source.</text>
</comment>
<comment type="similarity">
    <text evidence="4">Belongs to the ornithine cyclodeaminase/mu-crystallin family.</text>
</comment>
<evidence type="ECO:0000269" key="1">
    <source>
    </source>
</evidence>
<evidence type="ECO:0000269" key="2">
    <source>
    </source>
</evidence>
<evidence type="ECO:0000303" key="3">
    <source>
    </source>
</evidence>
<evidence type="ECO:0000305" key="4"/>
<keyword id="KW-0520">NAD</keyword>
<keyword id="KW-0521">NADP</keyword>
<keyword id="KW-0560">Oxidoreductase</keyword>
<keyword id="KW-1185">Reference proteome</keyword>
<protein>
    <recommendedName>
        <fullName evidence="3">NAD(P)H-dependent anabolic L-arginine dehydrogenase DauB</fullName>
        <ecNumber evidence="1">1.4.1.25</ecNumber>
    </recommendedName>
</protein>
<accession>Q9HXE4</accession>
<dbReference type="EC" id="1.4.1.25" evidence="1"/>
<dbReference type="EMBL" id="AE004091">
    <property type="protein sequence ID" value="AAG07249.1"/>
    <property type="molecule type" value="Genomic_DNA"/>
</dbReference>
<dbReference type="PIR" id="D83163">
    <property type="entry name" value="D83163"/>
</dbReference>
<dbReference type="RefSeq" id="NP_252551.1">
    <property type="nucleotide sequence ID" value="NC_002516.2"/>
</dbReference>
<dbReference type="RefSeq" id="WP_003113781.1">
    <property type="nucleotide sequence ID" value="NZ_QZGE01000001.1"/>
</dbReference>
<dbReference type="SMR" id="Q9HXE4"/>
<dbReference type="STRING" id="208964.PA3862"/>
<dbReference type="PaxDb" id="208964-PA3862"/>
<dbReference type="GeneID" id="879805"/>
<dbReference type="KEGG" id="pae:PA3862"/>
<dbReference type="PATRIC" id="fig|208964.12.peg.4044"/>
<dbReference type="PseudoCAP" id="PA3862"/>
<dbReference type="HOGENOM" id="CLU_042088_2_1_6"/>
<dbReference type="InParanoid" id="Q9HXE4"/>
<dbReference type="OrthoDB" id="7010472at2"/>
<dbReference type="PhylomeDB" id="Q9HXE4"/>
<dbReference type="BioCyc" id="MetaCyc:MONOMER-15372"/>
<dbReference type="BioCyc" id="PAER208964:G1FZ6-3933-MONOMER"/>
<dbReference type="BRENDA" id="1.4.1.25">
    <property type="organism ID" value="5087"/>
</dbReference>
<dbReference type="Proteomes" id="UP000002438">
    <property type="component" value="Chromosome"/>
</dbReference>
<dbReference type="GO" id="GO:0005737">
    <property type="term" value="C:cytoplasm"/>
    <property type="evidence" value="ECO:0000318"/>
    <property type="project" value="GO_Central"/>
</dbReference>
<dbReference type="GO" id="GO:0016639">
    <property type="term" value="F:oxidoreductase activity, acting on the CH-NH2 group of donors, NAD or NADP as acceptor"/>
    <property type="evidence" value="ECO:0000314"/>
    <property type="project" value="UniProtKB"/>
</dbReference>
<dbReference type="GO" id="GO:0006527">
    <property type="term" value="P:arginine catabolic process"/>
    <property type="evidence" value="ECO:0000315"/>
    <property type="project" value="UniProtKB"/>
</dbReference>
<dbReference type="GO" id="GO:0006525">
    <property type="term" value="P:arginine metabolic process"/>
    <property type="evidence" value="ECO:0000315"/>
    <property type="project" value="UniProtKB"/>
</dbReference>
<dbReference type="Gene3D" id="3.40.50.720">
    <property type="entry name" value="NAD(P)-binding Rossmann-like Domain"/>
    <property type="match status" value="1"/>
</dbReference>
<dbReference type="Gene3D" id="3.30.1780.10">
    <property type="entry name" value="ornithine cyclodeaminase, domain 1"/>
    <property type="match status" value="1"/>
</dbReference>
<dbReference type="InterPro" id="IPR036291">
    <property type="entry name" value="NAD(P)-bd_dom_sf"/>
</dbReference>
<dbReference type="InterPro" id="IPR003462">
    <property type="entry name" value="ODC_Mu_crystall"/>
</dbReference>
<dbReference type="InterPro" id="IPR023401">
    <property type="entry name" value="ODC_N"/>
</dbReference>
<dbReference type="PANTHER" id="PTHR13812">
    <property type="entry name" value="KETIMINE REDUCTASE MU-CRYSTALLIN"/>
    <property type="match status" value="1"/>
</dbReference>
<dbReference type="PANTHER" id="PTHR13812:SF19">
    <property type="entry name" value="KETIMINE REDUCTASE MU-CRYSTALLIN"/>
    <property type="match status" value="1"/>
</dbReference>
<dbReference type="Pfam" id="PF02423">
    <property type="entry name" value="OCD_Mu_crystall"/>
    <property type="match status" value="1"/>
</dbReference>
<dbReference type="PIRSF" id="PIRSF001439">
    <property type="entry name" value="CryM"/>
    <property type="match status" value="1"/>
</dbReference>
<dbReference type="SUPFAM" id="SSF51735">
    <property type="entry name" value="NAD(P)-binding Rossmann-fold domains"/>
    <property type="match status" value="1"/>
</dbReference>
<sequence>MSAATPLIVQQAEAEQLLARIDVLQAMRQLFLDLAAGQALQPAQQLVEFPAGRGDFINYLGVLAQEQVYGVKTSPYIVREQGPLVTAWTLLMSMQTGQPLLLCDAARLTTARTAATTAVAVDALAPAEACRLALIGSGPVAHAHLQYVKGLRDWQGVRVHSPCLDERRLQSLRAIDPRAEAAGSLEEALDEADVILLCTSSARAVIDPRQLKRPALVTSISTNAPRAHEVPAESLAAMDVYCDYRHTTPGSAGEMLIAAEQHGWSPEAIRGDLAELLSAQAPRPEYRRPAFFRSIGLGLEDVALANALYRLRQAG</sequence>
<name>DAUB_PSEAE</name>